<dbReference type="EC" id="2.8.1.10" evidence="1"/>
<dbReference type="EMBL" id="CP000025">
    <property type="protein sequence ID" value="AAW35514.1"/>
    <property type="molecule type" value="Genomic_DNA"/>
</dbReference>
<dbReference type="RefSeq" id="WP_011049875.1">
    <property type="nucleotide sequence ID" value="NC_003912.7"/>
</dbReference>
<dbReference type="SMR" id="Q5HU56"/>
<dbReference type="KEGG" id="cjr:CJE1189"/>
<dbReference type="HOGENOM" id="CLU_062233_1_0_7"/>
<dbReference type="UniPathway" id="UPA00060"/>
<dbReference type="GO" id="GO:0005737">
    <property type="term" value="C:cytoplasm"/>
    <property type="evidence" value="ECO:0007669"/>
    <property type="project" value="UniProtKB-SubCell"/>
</dbReference>
<dbReference type="GO" id="GO:1990107">
    <property type="term" value="F:thiazole synthase activity"/>
    <property type="evidence" value="ECO:0007669"/>
    <property type="project" value="UniProtKB-EC"/>
</dbReference>
<dbReference type="GO" id="GO:0009229">
    <property type="term" value="P:thiamine diphosphate biosynthetic process"/>
    <property type="evidence" value="ECO:0007669"/>
    <property type="project" value="UniProtKB-UniRule"/>
</dbReference>
<dbReference type="CDD" id="cd04728">
    <property type="entry name" value="ThiG"/>
    <property type="match status" value="1"/>
</dbReference>
<dbReference type="Gene3D" id="3.20.20.70">
    <property type="entry name" value="Aldolase class I"/>
    <property type="match status" value="1"/>
</dbReference>
<dbReference type="HAMAP" id="MF_00443">
    <property type="entry name" value="ThiG"/>
    <property type="match status" value="1"/>
</dbReference>
<dbReference type="InterPro" id="IPR013785">
    <property type="entry name" value="Aldolase_TIM"/>
</dbReference>
<dbReference type="InterPro" id="IPR033983">
    <property type="entry name" value="Thiazole_synthase_ThiG"/>
</dbReference>
<dbReference type="InterPro" id="IPR008867">
    <property type="entry name" value="ThiG"/>
</dbReference>
<dbReference type="PANTHER" id="PTHR34266">
    <property type="entry name" value="THIAZOLE SYNTHASE"/>
    <property type="match status" value="1"/>
</dbReference>
<dbReference type="PANTHER" id="PTHR34266:SF2">
    <property type="entry name" value="THIAZOLE SYNTHASE"/>
    <property type="match status" value="1"/>
</dbReference>
<dbReference type="Pfam" id="PF05690">
    <property type="entry name" value="ThiG"/>
    <property type="match status" value="1"/>
</dbReference>
<dbReference type="SUPFAM" id="SSF110399">
    <property type="entry name" value="ThiG-like"/>
    <property type="match status" value="1"/>
</dbReference>
<name>THIG_CAMJR</name>
<feature type="chain" id="PRO_0000162802" description="Thiazole synthase">
    <location>
        <begin position="1"/>
        <end position="258"/>
    </location>
</feature>
<feature type="active site" description="Schiff-base intermediate with DXP" evidence="1">
    <location>
        <position position="100"/>
    </location>
</feature>
<feature type="binding site" evidence="1">
    <location>
        <position position="161"/>
    </location>
    <ligand>
        <name>1-deoxy-D-xylulose 5-phosphate</name>
        <dbReference type="ChEBI" id="CHEBI:57792"/>
    </ligand>
</feature>
<feature type="binding site" evidence="1">
    <location>
        <begin position="187"/>
        <end position="188"/>
    </location>
    <ligand>
        <name>1-deoxy-D-xylulose 5-phosphate</name>
        <dbReference type="ChEBI" id="CHEBI:57792"/>
    </ligand>
</feature>
<feature type="binding site" evidence="1">
    <location>
        <begin position="209"/>
        <end position="210"/>
    </location>
    <ligand>
        <name>1-deoxy-D-xylulose 5-phosphate</name>
        <dbReference type="ChEBI" id="CHEBI:57792"/>
    </ligand>
</feature>
<accession>Q5HU56</accession>
<gene>
    <name evidence="1" type="primary">thiG</name>
    <name type="ordered locus">CJE1189</name>
</gene>
<comment type="function">
    <text evidence="1">Catalyzes the rearrangement of 1-deoxy-D-xylulose 5-phosphate (DXP) to produce the thiazole phosphate moiety of thiamine. Sulfur is provided by the thiocarboxylate moiety of the carrier protein ThiS. In vitro, sulfur can be provided by H(2)S.</text>
</comment>
<comment type="catalytic activity">
    <reaction evidence="1">
        <text>[ThiS sulfur-carrier protein]-C-terminal-Gly-aminoethanethioate + 2-iminoacetate + 1-deoxy-D-xylulose 5-phosphate = [ThiS sulfur-carrier protein]-C-terminal Gly-Gly + 2-[(2R,5Z)-2-carboxy-4-methylthiazol-5(2H)-ylidene]ethyl phosphate + 2 H2O + H(+)</text>
        <dbReference type="Rhea" id="RHEA:26297"/>
        <dbReference type="Rhea" id="RHEA-COMP:12909"/>
        <dbReference type="Rhea" id="RHEA-COMP:19908"/>
        <dbReference type="ChEBI" id="CHEBI:15377"/>
        <dbReference type="ChEBI" id="CHEBI:15378"/>
        <dbReference type="ChEBI" id="CHEBI:57792"/>
        <dbReference type="ChEBI" id="CHEBI:62899"/>
        <dbReference type="ChEBI" id="CHEBI:77846"/>
        <dbReference type="ChEBI" id="CHEBI:90778"/>
        <dbReference type="ChEBI" id="CHEBI:232372"/>
        <dbReference type="EC" id="2.8.1.10"/>
    </reaction>
</comment>
<comment type="pathway">
    <text evidence="1">Cofactor biosynthesis; thiamine diphosphate biosynthesis.</text>
</comment>
<comment type="subunit">
    <text evidence="1">Homotetramer. Forms heterodimers with either ThiH or ThiS.</text>
</comment>
<comment type="subcellular location">
    <subcellularLocation>
        <location evidence="1">Cytoplasm</location>
    </subcellularLocation>
</comment>
<comment type="similarity">
    <text evidence="1">Belongs to the ThiG family.</text>
</comment>
<reference key="1">
    <citation type="journal article" date="2005" name="PLoS Biol.">
        <title>Major structural differences and novel potential virulence mechanisms from the genomes of multiple Campylobacter species.</title>
        <authorList>
            <person name="Fouts D.E."/>
            <person name="Mongodin E.F."/>
            <person name="Mandrell R.E."/>
            <person name="Miller W.G."/>
            <person name="Rasko D.A."/>
            <person name="Ravel J."/>
            <person name="Brinkac L.M."/>
            <person name="DeBoy R.T."/>
            <person name="Parker C.T."/>
            <person name="Daugherty S.C."/>
            <person name="Dodson R.J."/>
            <person name="Durkin A.S."/>
            <person name="Madupu R."/>
            <person name="Sullivan S.A."/>
            <person name="Shetty J.U."/>
            <person name="Ayodeji M.A."/>
            <person name="Shvartsbeyn A."/>
            <person name="Schatz M.C."/>
            <person name="Badger J.H."/>
            <person name="Fraser C.M."/>
            <person name="Nelson K.E."/>
        </authorList>
    </citation>
    <scope>NUCLEOTIDE SEQUENCE [LARGE SCALE GENOMIC DNA]</scope>
    <source>
        <strain>RM1221</strain>
    </source>
</reference>
<protein>
    <recommendedName>
        <fullName evidence="1">Thiazole synthase</fullName>
        <ecNumber evidence="1">2.8.1.10</ecNumber>
    </recommendedName>
</protein>
<proteinExistence type="inferred from homology"/>
<keyword id="KW-0963">Cytoplasm</keyword>
<keyword id="KW-0704">Schiff base</keyword>
<keyword id="KW-0784">Thiamine biosynthesis</keyword>
<keyword id="KW-0808">Transferase</keyword>
<evidence type="ECO:0000255" key="1">
    <source>
        <dbReference type="HAMAP-Rule" id="MF_00443"/>
    </source>
</evidence>
<organism>
    <name type="scientific">Campylobacter jejuni (strain RM1221)</name>
    <dbReference type="NCBI Taxonomy" id="195099"/>
    <lineage>
        <taxon>Bacteria</taxon>
        <taxon>Pseudomonadati</taxon>
        <taxon>Campylobacterota</taxon>
        <taxon>Epsilonproteobacteria</taxon>
        <taxon>Campylobacterales</taxon>
        <taxon>Campylobacteraceae</taxon>
        <taxon>Campylobacter</taxon>
    </lineage>
</organism>
<sequence length="258" mass="27661">MQEKLKNDKLKIGKYEFDSRFILGSGKYSLELIKSAIEEAKAQIITLALRRANTGEIANILDYIPKNITLLPNTSGARNAEEALRIARLSRELGCGELIKIEVISDSRYLLPDNYETIKACELLAKEGFTPLPYMHADLYAARAMRDAGAAAIMPLAAPIGSNKGLCAKEFIQILLNEIDLPIIVDAGIGSPSQACEAMQMGVSAVMVNTAIAEAKDIALMARAFSLAVNAGRAAFLAGLASVSEAKASSPLTGFLRD</sequence>